<reference key="1">
    <citation type="submission" date="2007-05" db="EMBL/GenBank/DDBJ databases">
        <title>Complete sequence of Geobacter uraniireducens Rf4.</title>
        <authorList>
            <consortium name="US DOE Joint Genome Institute"/>
            <person name="Copeland A."/>
            <person name="Lucas S."/>
            <person name="Lapidus A."/>
            <person name="Barry K."/>
            <person name="Detter J.C."/>
            <person name="Glavina del Rio T."/>
            <person name="Hammon N."/>
            <person name="Israni S."/>
            <person name="Dalin E."/>
            <person name="Tice H."/>
            <person name="Pitluck S."/>
            <person name="Chertkov O."/>
            <person name="Brettin T."/>
            <person name="Bruce D."/>
            <person name="Han C."/>
            <person name="Schmutz J."/>
            <person name="Larimer F."/>
            <person name="Land M."/>
            <person name="Hauser L."/>
            <person name="Kyrpides N."/>
            <person name="Mikhailova N."/>
            <person name="Shelobolina E."/>
            <person name="Aklujkar M."/>
            <person name="Lovley D."/>
            <person name="Richardson P."/>
        </authorList>
    </citation>
    <scope>NUCLEOTIDE SEQUENCE [LARGE SCALE GENOMIC DNA]</scope>
    <source>
        <strain>ATCC BAA-1134 / JCM 13001 / Rf4</strain>
    </source>
</reference>
<protein>
    <recommendedName>
        <fullName evidence="1">Phosphoglucosamine mutase</fullName>
        <ecNumber evidence="1">5.4.2.10</ecNumber>
    </recommendedName>
</protein>
<comment type="function">
    <text evidence="1">Catalyzes the conversion of glucosamine-6-phosphate to glucosamine-1-phosphate.</text>
</comment>
<comment type="catalytic activity">
    <reaction evidence="1">
        <text>alpha-D-glucosamine 1-phosphate = D-glucosamine 6-phosphate</text>
        <dbReference type="Rhea" id="RHEA:23424"/>
        <dbReference type="ChEBI" id="CHEBI:58516"/>
        <dbReference type="ChEBI" id="CHEBI:58725"/>
        <dbReference type="EC" id="5.4.2.10"/>
    </reaction>
</comment>
<comment type="cofactor">
    <cofactor evidence="1">
        <name>Mg(2+)</name>
        <dbReference type="ChEBI" id="CHEBI:18420"/>
    </cofactor>
    <text evidence="1">Binds 1 Mg(2+) ion per subunit.</text>
</comment>
<comment type="PTM">
    <text evidence="1">Activated by phosphorylation.</text>
</comment>
<comment type="similarity">
    <text evidence="1">Belongs to the phosphohexose mutase family.</text>
</comment>
<gene>
    <name evidence="1" type="primary">glmM</name>
    <name type="ordered locus">Gura_2730</name>
</gene>
<organism>
    <name type="scientific">Geotalea uraniireducens (strain Rf4)</name>
    <name type="common">Geobacter uraniireducens</name>
    <dbReference type="NCBI Taxonomy" id="351605"/>
    <lineage>
        <taxon>Bacteria</taxon>
        <taxon>Pseudomonadati</taxon>
        <taxon>Thermodesulfobacteriota</taxon>
        <taxon>Desulfuromonadia</taxon>
        <taxon>Geobacterales</taxon>
        <taxon>Geobacteraceae</taxon>
        <taxon>Geotalea</taxon>
    </lineage>
</organism>
<feature type="chain" id="PRO_0000343590" description="Phosphoglucosamine mutase">
    <location>
        <begin position="1"/>
        <end position="454"/>
    </location>
</feature>
<feature type="active site" description="Phosphoserine intermediate" evidence="1">
    <location>
        <position position="101"/>
    </location>
</feature>
<feature type="binding site" description="via phosphate group" evidence="1">
    <location>
        <position position="101"/>
    </location>
    <ligand>
        <name>Mg(2+)</name>
        <dbReference type="ChEBI" id="CHEBI:18420"/>
    </ligand>
</feature>
<feature type="binding site" evidence="1">
    <location>
        <position position="243"/>
    </location>
    <ligand>
        <name>Mg(2+)</name>
        <dbReference type="ChEBI" id="CHEBI:18420"/>
    </ligand>
</feature>
<feature type="binding site" evidence="1">
    <location>
        <position position="245"/>
    </location>
    <ligand>
        <name>Mg(2+)</name>
        <dbReference type="ChEBI" id="CHEBI:18420"/>
    </ligand>
</feature>
<feature type="binding site" evidence="1">
    <location>
        <position position="247"/>
    </location>
    <ligand>
        <name>Mg(2+)</name>
        <dbReference type="ChEBI" id="CHEBI:18420"/>
    </ligand>
</feature>
<feature type="modified residue" description="Phosphoserine" evidence="1">
    <location>
        <position position="101"/>
    </location>
</feature>
<evidence type="ECO:0000255" key="1">
    <source>
        <dbReference type="HAMAP-Rule" id="MF_01554"/>
    </source>
</evidence>
<proteinExistence type="inferred from homology"/>
<sequence>MKKLFGTDGVRGVANVYPMTTEMAMQIGRAAAYIFRNGKRRHRIVIGKDTRLSGYMIENALVAGICSMGVDVLQVGPLPTPGIANITSSMRADAGVVISASHNPFQDNGIKFFSRDGFKLPDEMELRIEELIFSGKIDSLRPIATEVGKAYRIDDAVGRFVVFLKSTFPKDLDLSGLKIVLDCANGAAYKVAPAVLEELGAEVIAIGVKPNGTNINAGCGSLYPNIISEAVKEHRADLGIALDGDADRVIFVDEFGHEVDGDHIMAICATDMLKQNKLRENTLVATVMSNMGLDIAVKKAGGRVIKTAVGDRYVVEEMQKGGYNLGGEQSGHMIFLDHNTTGDGVLSALQVLAVMQRHNKRLSELAEVMIPLPQVLVNVRVTEKRDVMTIPEVAGLIGDIEAKVKDEGRILIRYSGTEPLLRVMLEGQDKYQITGWAKEIAELVEKNIGGSEHG</sequence>
<dbReference type="EC" id="5.4.2.10" evidence="1"/>
<dbReference type="EMBL" id="CP000698">
    <property type="protein sequence ID" value="ABQ26904.1"/>
    <property type="molecule type" value="Genomic_DNA"/>
</dbReference>
<dbReference type="RefSeq" id="WP_011939580.1">
    <property type="nucleotide sequence ID" value="NC_009483.1"/>
</dbReference>
<dbReference type="SMR" id="A5G536"/>
<dbReference type="STRING" id="351605.Gura_2730"/>
<dbReference type="KEGG" id="gur:Gura_2730"/>
<dbReference type="HOGENOM" id="CLU_016950_7_0_7"/>
<dbReference type="OrthoDB" id="9806956at2"/>
<dbReference type="Proteomes" id="UP000006695">
    <property type="component" value="Chromosome"/>
</dbReference>
<dbReference type="GO" id="GO:0005829">
    <property type="term" value="C:cytosol"/>
    <property type="evidence" value="ECO:0007669"/>
    <property type="project" value="TreeGrafter"/>
</dbReference>
<dbReference type="GO" id="GO:0000287">
    <property type="term" value="F:magnesium ion binding"/>
    <property type="evidence" value="ECO:0007669"/>
    <property type="project" value="UniProtKB-UniRule"/>
</dbReference>
<dbReference type="GO" id="GO:0008966">
    <property type="term" value="F:phosphoglucosamine mutase activity"/>
    <property type="evidence" value="ECO:0007669"/>
    <property type="project" value="UniProtKB-UniRule"/>
</dbReference>
<dbReference type="GO" id="GO:0004615">
    <property type="term" value="F:phosphomannomutase activity"/>
    <property type="evidence" value="ECO:0007669"/>
    <property type="project" value="TreeGrafter"/>
</dbReference>
<dbReference type="GO" id="GO:0005975">
    <property type="term" value="P:carbohydrate metabolic process"/>
    <property type="evidence" value="ECO:0007669"/>
    <property type="project" value="InterPro"/>
</dbReference>
<dbReference type="GO" id="GO:0009252">
    <property type="term" value="P:peptidoglycan biosynthetic process"/>
    <property type="evidence" value="ECO:0007669"/>
    <property type="project" value="TreeGrafter"/>
</dbReference>
<dbReference type="GO" id="GO:0006048">
    <property type="term" value="P:UDP-N-acetylglucosamine biosynthetic process"/>
    <property type="evidence" value="ECO:0007669"/>
    <property type="project" value="TreeGrafter"/>
</dbReference>
<dbReference type="CDD" id="cd05802">
    <property type="entry name" value="GlmM"/>
    <property type="match status" value="1"/>
</dbReference>
<dbReference type="FunFam" id="3.30.310.50:FF:000001">
    <property type="entry name" value="Phosphoglucosamine mutase"/>
    <property type="match status" value="1"/>
</dbReference>
<dbReference type="FunFam" id="3.40.120.10:FF:000001">
    <property type="entry name" value="Phosphoglucosamine mutase"/>
    <property type="match status" value="1"/>
</dbReference>
<dbReference type="FunFam" id="3.40.120.10:FF:000002">
    <property type="entry name" value="Phosphoglucosamine mutase"/>
    <property type="match status" value="1"/>
</dbReference>
<dbReference type="Gene3D" id="3.40.120.10">
    <property type="entry name" value="Alpha-D-Glucose-1,6-Bisphosphate, subunit A, domain 3"/>
    <property type="match status" value="3"/>
</dbReference>
<dbReference type="Gene3D" id="3.30.310.50">
    <property type="entry name" value="Alpha-D-phosphohexomutase, C-terminal domain"/>
    <property type="match status" value="1"/>
</dbReference>
<dbReference type="HAMAP" id="MF_01554_B">
    <property type="entry name" value="GlmM_B"/>
    <property type="match status" value="1"/>
</dbReference>
<dbReference type="InterPro" id="IPR005844">
    <property type="entry name" value="A-D-PHexomutase_a/b/a-I"/>
</dbReference>
<dbReference type="InterPro" id="IPR016055">
    <property type="entry name" value="A-D-PHexomutase_a/b/a-I/II/III"/>
</dbReference>
<dbReference type="InterPro" id="IPR005845">
    <property type="entry name" value="A-D-PHexomutase_a/b/a-II"/>
</dbReference>
<dbReference type="InterPro" id="IPR005846">
    <property type="entry name" value="A-D-PHexomutase_a/b/a-III"/>
</dbReference>
<dbReference type="InterPro" id="IPR005843">
    <property type="entry name" value="A-D-PHexomutase_C"/>
</dbReference>
<dbReference type="InterPro" id="IPR036900">
    <property type="entry name" value="A-D-PHexomutase_C_sf"/>
</dbReference>
<dbReference type="InterPro" id="IPR016066">
    <property type="entry name" value="A-D-PHexomutase_CS"/>
</dbReference>
<dbReference type="InterPro" id="IPR005841">
    <property type="entry name" value="Alpha-D-phosphohexomutase_SF"/>
</dbReference>
<dbReference type="InterPro" id="IPR006352">
    <property type="entry name" value="GlmM_bact"/>
</dbReference>
<dbReference type="InterPro" id="IPR050060">
    <property type="entry name" value="Phosphoglucosamine_mutase"/>
</dbReference>
<dbReference type="NCBIfam" id="TIGR01455">
    <property type="entry name" value="glmM"/>
    <property type="match status" value="1"/>
</dbReference>
<dbReference type="NCBIfam" id="NF008139">
    <property type="entry name" value="PRK10887.1"/>
    <property type="match status" value="1"/>
</dbReference>
<dbReference type="PANTHER" id="PTHR42946:SF1">
    <property type="entry name" value="PHOSPHOGLUCOMUTASE (ALPHA-D-GLUCOSE-1,6-BISPHOSPHATE-DEPENDENT)"/>
    <property type="match status" value="1"/>
</dbReference>
<dbReference type="PANTHER" id="PTHR42946">
    <property type="entry name" value="PHOSPHOHEXOSE MUTASE"/>
    <property type="match status" value="1"/>
</dbReference>
<dbReference type="Pfam" id="PF02878">
    <property type="entry name" value="PGM_PMM_I"/>
    <property type="match status" value="1"/>
</dbReference>
<dbReference type="Pfam" id="PF02879">
    <property type="entry name" value="PGM_PMM_II"/>
    <property type="match status" value="1"/>
</dbReference>
<dbReference type="Pfam" id="PF02880">
    <property type="entry name" value="PGM_PMM_III"/>
    <property type="match status" value="1"/>
</dbReference>
<dbReference type="Pfam" id="PF00408">
    <property type="entry name" value="PGM_PMM_IV"/>
    <property type="match status" value="1"/>
</dbReference>
<dbReference type="PRINTS" id="PR00509">
    <property type="entry name" value="PGMPMM"/>
</dbReference>
<dbReference type="SUPFAM" id="SSF55957">
    <property type="entry name" value="Phosphoglucomutase, C-terminal domain"/>
    <property type="match status" value="1"/>
</dbReference>
<dbReference type="SUPFAM" id="SSF53738">
    <property type="entry name" value="Phosphoglucomutase, first 3 domains"/>
    <property type="match status" value="3"/>
</dbReference>
<dbReference type="PROSITE" id="PS00710">
    <property type="entry name" value="PGM_PMM"/>
    <property type="match status" value="1"/>
</dbReference>
<keyword id="KW-0413">Isomerase</keyword>
<keyword id="KW-0460">Magnesium</keyword>
<keyword id="KW-0479">Metal-binding</keyword>
<keyword id="KW-0597">Phosphoprotein</keyword>
<keyword id="KW-1185">Reference proteome</keyword>
<accession>A5G536</accession>
<name>GLMM_GEOUR</name>